<reference key="1">
    <citation type="submission" date="2007-11" db="EMBL/GenBank/DDBJ databases">
        <title>Complete sequence of chromosome of Shewanella baltica OS195.</title>
        <authorList>
            <consortium name="US DOE Joint Genome Institute"/>
            <person name="Copeland A."/>
            <person name="Lucas S."/>
            <person name="Lapidus A."/>
            <person name="Barry K."/>
            <person name="Glavina del Rio T."/>
            <person name="Dalin E."/>
            <person name="Tice H."/>
            <person name="Pitluck S."/>
            <person name="Chain P."/>
            <person name="Malfatti S."/>
            <person name="Shin M."/>
            <person name="Vergez L."/>
            <person name="Schmutz J."/>
            <person name="Larimer F."/>
            <person name="Land M."/>
            <person name="Hauser L."/>
            <person name="Kyrpides N."/>
            <person name="Kim E."/>
            <person name="Brettar I."/>
            <person name="Rodrigues J."/>
            <person name="Konstantinidis K."/>
            <person name="Klappenbach J."/>
            <person name="Hofle M."/>
            <person name="Tiedje J."/>
            <person name="Richardson P."/>
        </authorList>
    </citation>
    <scope>NUCLEOTIDE SEQUENCE [LARGE SCALE GENOMIC DNA]</scope>
    <source>
        <strain>OS195</strain>
    </source>
</reference>
<sequence length="136" mass="14575">MSLIKEFKAFASRGNVIDMAVGIIIGAAFGKIVSSFVADIIMPPIGIILGGVNFSDLSIVLQAAQGDAPSVVIAYGKFIQTIIDFTIIAFAIFMGVKAINRLKRKEEVAPKAPAAPTKDQELLSEIRDLLKAQQEK</sequence>
<name>MSCL_SHEB9</name>
<organism>
    <name type="scientific">Shewanella baltica (strain OS195)</name>
    <dbReference type="NCBI Taxonomy" id="399599"/>
    <lineage>
        <taxon>Bacteria</taxon>
        <taxon>Pseudomonadati</taxon>
        <taxon>Pseudomonadota</taxon>
        <taxon>Gammaproteobacteria</taxon>
        <taxon>Alteromonadales</taxon>
        <taxon>Shewanellaceae</taxon>
        <taxon>Shewanella</taxon>
    </lineage>
</organism>
<protein>
    <recommendedName>
        <fullName evidence="1">Large-conductance mechanosensitive channel</fullName>
    </recommendedName>
</protein>
<feature type="chain" id="PRO_1000076047" description="Large-conductance mechanosensitive channel">
    <location>
        <begin position="1"/>
        <end position="136"/>
    </location>
</feature>
<feature type="transmembrane region" description="Helical" evidence="1">
    <location>
        <begin position="9"/>
        <end position="29"/>
    </location>
</feature>
<feature type="transmembrane region" description="Helical" evidence="1">
    <location>
        <begin position="79"/>
        <end position="99"/>
    </location>
</feature>
<proteinExistence type="inferred from homology"/>
<evidence type="ECO:0000255" key="1">
    <source>
        <dbReference type="HAMAP-Rule" id="MF_00115"/>
    </source>
</evidence>
<dbReference type="EMBL" id="CP000891">
    <property type="protein sequence ID" value="ABX51131.1"/>
    <property type="molecule type" value="Genomic_DNA"/>
</dbReference>
<dbReference type="RefSeq" id="WP_006084265.1">
    <property type="nucleotide sequence ID" value="NC_009997.1"/>
</dbReference>
<dbReference type="SMR" id="A9L4L5"/>
<dbReference type="GeneID" id="11773971"/>
<dbReference type="KEGG" id="sbn:Sbal195_3971"/>
<dbReference type="HOGENOM" id="CLU_095787_0_0_6"/>
<dbReference type="Proteomes" id="UP000000770">
    <property type="component" value="Chromosome"/>
</dbReference>
<dbReference type="GO" id="GO:0005886">
    <property type="term" value="C:plasma membrane"/>
    <property type="evidence" value="ECO:0007669"/>
    <property type="project" value="UniProtKB-SubCell"/>
</dbReference>
<dbReference type="GO" id="GO:0008381">
    <property type="term" value="F:mechanosensitive monoatomic ion channel activity"/>
    <property type="evidence" value="ECO:0007669"/>
    <property type="project" value="UniProtKB-UniRule"/>
</dbReference>
<dbReference type="FunFam" id="1.10.1200.120:FF:000001">
    <property type="entry name" value="Large-conductance mechanosensitive channel"/>
    <property type="match status" value="1"/>
</dbReference>
<dbReference type="Gene3D" id="1.10.1200.120">
    <property type="entry name" value="Large-conductance mechanosensitive channel, MscL, domain 1"/>
    <property type="match status" value="1"/>
</dbReference>
<dbReference type="HAMAP" id="MF_00115">
    <property type="entry name" value="MscL"/>
    <property type="match status" value="1"/>
</dbReference>
<dbReference type="InterPro" id="IPR019823">
    <property type="entry name" value="Mechanosensitive_channel_CS"/>
</dbReference>
<dbReference type="InterPro" id="IPR001185">
    <property type="entry name" value="MS_channel"/>
</dbReference>
<dbReference type="InterPro" id="IPR037673">
    <property type="entry name" value="MSC/AndL"/>
</dbReference>
<dbReference type="InterPro" id="IPR036019">
    <property type="entry name" value="MscL_channel"/>
</dbReference>
<dbReference type="NCBIfam" id="TIGR00220">
    <property type="entry name" value="mscL"/>
    <property type="match status" value="1"/>
</dbReference>
<dbReference type="NCBIfam" id="NF001843">
    <property type="entry name" value="PRK00567.1-4"/>
    <property type="match status" value="1"/>
</dbReference>
<dbReference type="PANTHER" id="PTHR30266:SF2">
    <property type="entry name" value="LARGE-CONDUCTANCE MECHANOSENSITIVE CHANNEL"/>
    <property type="match status" value="1"/>
</dbReference>
<dbReference type="PANTHER" id="PTHR30266">
    <property type="entry name" value="MECHANOSENSITIVE CHANNEL MSCL"/>
    <property type="match status" value="1"/>
</dbReference>
<dbReference type="Pfam" id="PF01741">
    <property type="entry name" value="MscL"/>
    <property type="match status" value="1"/>
</dbReference>
<dbReference type="PRINTS" id="PR01264">
    <property type="entry name" value="MECHCHANNEL"/>
</dbReference>
<dbReference type="SUPFAM" id="SSF81330">
    <property type="entry name" value="Gated mechanosensitive channel"/>
    <property type="match status" value="1"/>
</dbReference>
<dbReference type="PROSITE" id="PS01327">
    <property type="entry name" value="MSCL"/>
    <property type="match status" value="1"/>
</dbReference>
<comment type="function">
    <text evidence="1">Channel that opens in response to stretch forces in the membrane lipid bilayer. May participate in the regulation of osmotic pressure changes within the cell.</text>
</comment>
<comment type="subunit">
    <text evidence="1">Homopentamer.</text>
</comment>
<comment type="subcellular location">
    <subcellularLocation>
        <location evidence="1">Cell inner membrane</location>
        <topology evidence="1">Multi-pass membrane protein</topology>
    </subcellularLocation>
</comment>
<comment type="similarity">
    <text evidence="1">Belongs to the MscL family.</text>
</comment>
<accession>A9L4L5</accession>
<gene>
    <name evidence="1" type="primary">mscL</name>
    <name type="ordered locus">Sbal195_3971</name>
</gene>
<keyword id="KW-0997">Cell inner membrane</keyword>
<keyword id="KW-1003">Cell membrane</keyword>
<keyword id="KW-0407">Ion channel</keyword>
<keyword id="KW-0406">Ion transport</keyword>
<keyword id="KW-0472">Membrane</keyword>
<keyword id="KW-0812">Transmembrane</keyword>
<keyword id="KW-1133">Transmembrane helix</keyword>
<keyword id="KW-0813">Transport</keyword>